<comment type="function">
    <text evidence="3 4 6">Plays a role in immune evasion. When secreted, inhibits T-cell activation by preventing the binding of host CD80 and CD86 to soluble CTLA4 and CD28 (PubMed:30918073). In the infected cell, may inhibits host NF kappa B activation (PubMed:16912315, PubMed:18190944).</text>
</comment>
<comment type="subunit">
    <text evidence="6">Homooligomer. Interacts with host CD80 and CD86 when secreted.</text>
</comment>
<comment type="subcellular location">
    <subcellularLocation>
        <location evidence="4">Host endoplasmic reticulum</location>
    </subcellularLocation>
    <subcellularLocation>
        <location evidence="6">Secreted</location>
    </subcellularLocation>
</comment>
<comment type="induction">
    <text evidence="5">Expressed in the early phase of the viral replicative cycle.</text>
</comment>
<comment type="PTM">
    <text evidence="4">Glycosylated by host.</text>
</comment>
<comment type="similarity">
    <text evidence="7">Belongs to the orthopoxvirus OPG038 family.</text>
</comment>
<accession>Q80HY2</accession>
<evidence type="ECO:0000255" key="1"/>
<evidence type="ECO:0000255" key="2">
    <source>
        <dbReference type="PROSITE-ProRule" id="PRU00498"/>
    </source>
</evidence>
<evidence type="ECO:0000269" key="3">
    <source>
    </source>
</evidence>
<evidence type="ECO:0000269" key="4">
    <source>
    </source>
</evidence>
<evidence type="ECO:0000269" key="5">
    <source>
    </source>
</evidence>
<evidence type="ECO:0000269" key="6">
    <source>
    </source>
</evidence>
<evidence type="ECO:0000305" key="7"/>
<reference key="1">
    <citation type="submission" date="2003-02" db="EMBL/GenBank/DDBJ databases">
        <title>Sequencing of the coding region of Vaccinia-WR to an average 9-fold redundancy and an error rate of 0.16/10kb.</title>
        <authorList>
            <person name="Esposito J.J."/>
            <person name="Frace A.M."/>
            <person name="Sammons S.A."/>
            <person name="Olsen-Rasmussen M."/>
            <person name="Osborne J."/>
            <person name="Wohlhueter R."/>
        </authorList>
    </citation>
    <scope>NUCLEOTIDE SEQUENCE [LARGE SCALE GENOMIC DNA]</scope>
</reference>
<reference key="2">
    <citation type="journal article" date="2006" name="J. Virol.">
        <title>Poxviral regulation of the host NF-kappaB response: the vaccinia virus M2L protein inhibits induction of NF-kappaB activation via an ERK2 pathway in virus-infected human embryonic kidney cells.</title>
        <authorList>
            <person name="Gedey R."/>
            <person name="Jin X.L."/>
            <person name="Hinthong O."/>
            <person name="Shisler J.L."/>
        </authorList>
    </citation>
    <scope>FUNCTION</scope>
</reference>
<reference key="3">
    <citation type="journal article" date="2008" name="Virology">
        <title>Characterization of wild-type and mutant vaccinia virus M2L proteins' abilities to localize to the endoplasmic reticulum and to inhibit NF-kappaB activation during infection.</title>
        <authorList>
            <person name="Hinthong O."/>
            <person name="Jin X.L."/>
            <person name="Shisler J.L."/>
        </authorList>
    </citation>
    <scope>FUNCTION</scope>
    <scope>SUBCELLULAR LOCATION</scope>
    <scope>GLYCOSYLATION</scope>
    <scope>MUTAGENESIS OF 179-ASP--GLU-220</scope>
</reference>
<reference key="4">
    <citation type="journal article" date="2019" name="J. Virol.">
        <title>By Binding CD80 and CD86, the Vaccinia Virus M2 Protein Blocks Their Interactions with both CD28 and CTLA4 and Potentiates CD80 Binding to PD-L1.</title>
        <authorList>
            <person name="Kleinpeter P."/>
            <person name="Remy-Ziller C."/>
            <person name="Winter E."/>
            <person name="Gantzer M."/>
            <person name="Nourtier V."/>
            <person name="Kempf J."/>
            <person name="Hortelano J."/>
            <person name="Schmitt D."/>
            <person name="Schultz H."/>
            <person name="Geist M."/>
            <person name="Brua C."/>
            <person name="Hoffmann C."/>
            <person name="Schlesinger Y."/>
            <person name="Villeval D."/>
            <person name="Thioudellet C."/>
            <person name="Erbs P."/>
            <person name="Foloppe J."/>
            <person name="Silvestre N."/>
            <person name="Fend L."/>
            <person name="Quemeneur E."/>
            <person name="Marchand J.B."/>
        </authorList>
    </citation>
    <scope>FUNCTION</scope>
    <scope>SUBCELLULAR LOCATION</scope>
    <scope>INTERACTION WITH HOST CD80</scope>
    <scope>INTERACTION WITH HOST CD86</scope>
</reference>
<reference key="5">
    <citation type="journal article" date="2015" name="J. Virol.">
        <title>Deciphering poxvirus gene expression by RNA sequencing and ribosome profiling.</title>
        <authorList>
            <person name="Yang Z."/>
            <person name="Cao S."/>
            <person name="Martens C.A."/>
            <person name="Porcella S.F."/>
            <person name="Xie Z."/>
            <person name="Ma M."/>
            <person name="Shen B."/>
            <person name="Moss B."/>
        </authorList>
    </citation>
    <scope>INDUCTION</scope>
</reference>
<sequence>MVYKLVLLFCIASLGYSVEYKNTICPPRQDYRYWYFAAELTIGVNYDINSTIIGECHMSESYIDRNANIVLTGYGLEINMTIMDTDQRFVAAAEGVGKDNKLSVLLFTTQRLDKVHHNISVTITCMEMNCGTTKYDSDLPESIHKSSSCDITINGSCVTCVNLETDPTKINPHYLHPKDKYLYHNSEYSMRGSYGVTFIDELNQCLLDIKELSYDICYRE</sequence>
<dbReference type="EMBL" id="AY243312">
    <property type="protein sequence ID" value="AAO89310.1"/>
    <property type="molecule type" value="Genomic_DNA"/>
</dbReference>
<dbReference type="RefSeq" id="YP_232913.1">
    <property type="nucleotide sequence ID" value="NC_006998.1"/>
</dbReference>
<dbReference type="SMR" id="Q80HY2"/>
<dbReference type="DNASU" id="3707646"/>
<dbReference type="GeneID" id="3707646"/>
<dbReference type="KEGG" id="vg:3707646"/>
<dbReference type="Proteomes" id="UP000000344">
    <property type="component" value="Genome"/>
</dbReference>
<dbReference type="GO" id="GO:0005615">
    <property type="term" value="C:extracellular space"/>
    <property type="evidence" value="ECO:0000314"/>
    <property type="project" value="UniProt"/>
</dbReference>
<dbReference type="GO" id="GO:0044165">
    <property type="term" value="C:host cell endoplasmic reticulum"/>
    <property type="evidence" value="ECO:0007669"/>
    <property type="project" value="UniProtKB-SubCell"/>
</dbReference>
<dbReference type="GO" id="GO:0140311">
    <property type="term" value="F:protein sequestering activity"/>
    <property type="evidence" value="ECO:0000314"/>
    <property type="project" value="UniProt"/>
</dbReference>
<dbReference type="GO" id="GO:0085034">
    <property type="term" value="P:symbiont-mediated suppression of host NF-kappaB cascade"/>
    <property type="evidence" value="ECO:0007669"/>
    <property type="project" value="UniProtKB-KW"/>
</dbReference>
<dbReference type="GO" id="GO:0052085">
    <property type="term" value="P:symbiont-mediated suppression of host T-cell mediated immune response"/>
    <property type="evidence" value="ECO:0000314"/>
    <property type="project" value="UniProt"/>
</dbReference>
<dbReference type="InterPro" id="IPR006971">
    <property type="entry name" value="Poxvirus_M2"/>
</dbReference>
<dbReference type="Pfam" id="PF04887">
    <property type="entry name" value="Pox_M2"/>
    <property type="match status" value="1"/>
</dbReference>
<dbReference type="PIRSF" id="PIRSF015982">
    <property type="entry name" value="VAC_M2L"/>
    <property type="match status" value="1"/>
</dbReference>
<gene>
    <name type="primary">OPG038</name>
    <name type="synonym">M2L</name>
    <name type="ordered locus">VACWR031</name>
</gene>
<keyword id="KW-0244">Early protein</keyword>
<keyword id="KW-0325">Glycoprotein</keyword>
<keyword id="KW-1038">Host endoplasmic reticulum</keyword>
<keyword id="KW-0945">Host-virus interaction</keyword>
<keyword id="KW-1100">Inhibition of host NF-kappa-B by virus</keyword>
<keyword id="KW-1185">Reference proteome</keyword>
<keyword id="KW-0964">Secreted</keyword>
<keyword id="KW-0732">Signal</keyword>
<keyword id="KW-0899">Viral immunoevasion</keyword>
<protein>
    <recommendedName>
        <fullName>Early protein OPG038</fullName>
    </recommendedName>
    <alternativeName>
        <fullName>Protein M2</fullName>
    </alternativeName>
</protein>
<feature type="signal peptide" evidence="1">
    <location>
        <begin position="1"/>
        <end position="17"/>
    </location>
</feature>
<feature type="chain" id="PRO_0000418531" description="Early protein OPG038" evidence="1">
    <location>
        <begin position="18"/>
        <end position="220"/>
    </location>
</feature>
<feature type="glycosylation site" description="N-linked (GlcNAc...) asparagine; by host" evidence="2">
    <location>
        <position position="49"/>
    </location>
</feature>
<feature type="glycosylation site" description="N-linked (GlcNAc...) asparagine; by host" evidence="2">
    <location>
        <position position="79"/>
    </location>
</feature>
<feature type="glycosylation site" description="N-linked (GlcNAc...) asparagine; by host" evidence="2">
    <location>
        <position position="118"/>
    </location>
</feature>
<feature type="glycosylation site" description="N-linked (GlcNAc...) asparagine; by host" evidence="2">
    <location>
        <position position="154"/>
    </location>
</feature>
<feature type="mutagenesis site" description="Complete loss of host NFkappaB inhibition." evidence="4">
    <location>
        <begin position="179"/>
        <end position="220"/>
    </location>
</feature>
<name>PG038_VACCW</name>
<organismHost>
    <name type="scientific">Bos taurus</name>
    <name type="common">Bovine</name>
    <dbReference type="NCBI Taxonomy" id="9913"/>
</organismHost>
<organism>
    <name type="scientific">Vaccinia virus (strain Western Reserve)</name>
    <name type="common">VACV</name>
    <name type="synonym">Vaccinia virus (strain WR)</name>
    <dbReference type="NCBI Taxonomy" id="10254"/>
    <lineage>
        <taxon>Viruses</taxon>
        <taxon>Varidnaviria</taxon>
        <taxon>Bamfordvirae</taxon>
        <taxon>Nucleocytoviricota</taxon>
        <taxon>Pokkesviricetes</taxon>
        <taxon>Chitovirales</taxon>
        <taxon>Poxviridae</taxon>
        <taxon>Chordopoxvirinae</taxon>
        <taxon>Orthopoxvirus</taxon>
        <taxon>Vaccinia virus</taxon>
    </lineage>
</organism>
<proteinExistence type="evidence at protein level"/>